<protein>
    <recommendedName>
        <fullName>Uncharacterized protein DDB_G0283689</fullName>
    </recommendedName>
</protein>
<proteinExistence type="predicted"/>
<keyword id="KW-1185">Reference proteome</keyword>
<organism>
    <name type="scientific">Dictyostelium discoideum</name>
    <name type="common">Social amoeba</name>
    <dbReference type="NCBI Taxonomy" id="44689"/>
    <lineage>
        <taxon>Eukaryota</taxon>
        <taxon>Amoebozoa</taxon>
        <taxon>Evosea</taxon>
        <taxon>Eumycetozoa</taxon>
        <taxon>Dictyostelia</taxon>
        <taxon>Dictyosteliales</taxon>
        <taxon>Dictyosteliaceae</taxon>
        <taxon>Dictyostelium</taxon>
    </lineage>
</organism>
<name>Y5630_DICDI</name>
<gene>
    <name type="ORF">DDB_G0283689</name>
</gene>
<dbReference type="EMBL" id="AAFI02000056">
    <property type="protein sequence ID" value="EAL65611.1"/>
    <property type="molecule type" value="Genomic_DNA"/>
</dbReference>
<dbReference type="RefSeq" id="XP_638967.1">
    <property type="nucleotide sequence ID" value="XM_633875.1"/>
</dbReference>
<dbReference type="PaxDb" id="44689-DDB0185630"/>
<dbReference type="EnsemblProtists" id="EAL65611">
    <property type="protein sequence ID" value="EAL65611"/>
    <property type="gene ID" value="DDB_G0283689"/>
</dbReference>
<dbReference type="GeneID" id="8624213"/>
<dbReference type="KEGG" id="ddi:DDB_G0283689"/>
<dbReference type="dictyBase" id="DDB_G0283689"/>
<dbReference type="VEuPathDB" id="AmoebaDB:DDB_G0283689"/>
<dbReference type="HOGENOM" id="CLU_1498973_0_0_1"/>
<dbReference type="InParanoid" id="Q54QQ6"/>
<dbReference type="PRO" id="PR:Q54QQ6"/>
<dbReference type="Proteomes" id="UP000002195">
    <property type="component" value="Chromosome 4"/>
</dbReference>
<feature type="chain" id="PRO_0000350887" description="Uncharacterized protein DDB_G0283689">
    <location>
        <begin position="1"/>
        <end position="180"/>
    </location>
</feature>
<reference key="1">
    <citation type="journal article" date="2005" name="Nature">
        <title>The genome of the social amoeba Dictyostelium discoideum.</title>
        <authorList>
            <person name="Eichinger L."/>
            <person name="Pachebat J.A."/>
            <person name="Gloeckner G."/>
            <person name="Rajandream M.A."/>
            <person name="Sucgang R."/>
            <person name="Berriman M."/>
            <person name="Song J."/>
            <person name="Olsen R."/>
            <person name="Szafranski K."/>
            <person name="Xu Q."/>
            <person name="Tunggal B."/>
            <person name="Kummerfeld S."/>
            <person name="Madera M."/>
            <person name="Konfortov B.A."/>
            <person name="Rivero F."/>
            <person name="Bankier A.T."/>
            <person name="Lehmann R."/>
            <person name="Hamlin N."/>
            <person name="Davies R."/>
            <person name="Gaudet P."/>
            <person name="Fey P."/>
            <person name="Pilcher K."/>
            <person name="Chen G."/>
            <person name="Saunders D."/>
            <person name="Sodergren E.J."/>
            <person name="Davis P."/>
            <person name="Kerhornou A."/>
            <person name="Nie X."/>
            <person name="Hall N."/>
            <person name="Anjard C."/>
            <person name="Hemphill L."/>
            <person name="Bason N."/>
            <person name="Farbrother P."/>
            <person name="Desany B."/>
            <person name="Just E."/>
            <person name="Morio T."/>
            <person name="Rost R."/>
            <person name="Churcher C.M."/>
            <person name="Cooper J."/>
            <person name="Haydock S."/>
            <person name="van Driessche N."/>
            <person name="Cronin A."/>
            <person name="Goodhead I."/>
            <person name="Muzny D.M."/>
            <person name="Mourier T."/>
            <person name="Pain A."/>
            <person name="Lu M."/>
            <person name="Harper D."/>
            <person name="Lindsay R."/>
            <person name="Hauser H."/>
            <person name="James K.D."/>
            <person name="Quiles M."/>
            <person name="Madan Babu M."/>
            <person name="Saito T."/>
            <person name="Buchrieser C."/>
            <person name="Wardroper A."/>
            <person name="Felder M."/>
            <person name="Thangavelu M."/>
            <person name="Johnson D."/>
            <person name="Knights A."/>
            <person name="Loulseged H."/>
            <person name="Mungall K.L."/>
            <person name="Oliver K."/>
            <person name="Price C."/>
            <person name="Quail M.A."/>
            <person name="Urushihara H."/>
            <person name="Hernandez J."/>
            <person name="Rabbinowitsch E."/>
            <person name="Steffen D."/>
            <person name="Sanders M."/>
            <person name="Ma J."/>
            <person name="Kohara Y."/>
            <person name="Sharp S."/>
            <person name="Simmonds M.N."/>
            <person name="Spiegler S."/>
            <person name="Tivey A."/>
            <person name="Sugano S."/>
            <person name="White B."/>
            <person name="Walker D."/>
            <person name="Woodward J.R."/>
            <person name="Winckler T."/>
            <person name="Tanaka Y."/>
            <person name="Shaulsky G."/>
            <person name="Schleicher M."/>
            <person name="Weinstock G.M."/>
            <person name="Rosenthal A."/>
            <person name="Cox E.C."/>
            <person name="Chisholm R.L."/>
            <person name="Gibbs R.A."/>
            <person name="Loomis W.F."/>
            <person name="Platzer M."/>
            <person name="Kay R.R."/>
            <person name="Williams J.G."/>
            <person name="Dear P.H."/>
            <person name="Noegel A.A."/>
            <person name="Barrell B.G."/>
            <person name="Kuspa A."/>
        </authorList>
    </citation>
    <scope>NUCLEOTIDE SEQUENCE [LARGE SCALE GENOMIC DNA]</scope>
    <source>
        <strain>AX4</strain>
    </source>
</reference>
<accession>Q54QQ6</accession>
<sequence length="180" mass="21460">MSTTIDNLDGGVEVGEVGEVGEETSLYFNSFNWKELKRENNRDNVEMWCNIHDGEEHTFEELASFYAVCIRDQFVEMKYNYRDLKLHKITFIAKSKYGLYDSLIPQHNHNHGNNLQQTFLFHSNGLENPYFEENIIKFSRESINLVRYYFEIYYGNSKYLKNWSILGDSDEYYCKMAKFK</sequence>